<evidence type="ECO:0000255" key="1">
    <source>
        <dbReference type="HAMAP-Rule" id="MF_01307"/>
    </source>
</evidence>
<evidence type="ECO:0000305" key="2"/>
<keyword id="KW-0687">Ribonucleoprotein</keyword>
<keyword id="KW-0689">Ribosomal protein</keyword>
<keyword id="KW-0694">RNA-binding</keyword>
<keyword id="KW-0699">rRNA-binding</keyword>
<sequence>MAYQDEESKEYSEKVVKIDRVAKVVKGGRRFSFNALSVVGDQKGKVGIGFGKANEVPDAIRKSIEAAKKHLVKINFKGHTIPHEVVGKFKSARVILKPSTAGTGIIAGASVRSIVEKAGIQDVLTKSWGSSNPVNIVKATLDALEQLETPILAAKKRGISLNQLFGKD</sequence>
<organism>
    <name type="scientific">Leptospira borgpetersenii serovar Hardjo-bovis (strain JB197)</name>
    <dbReference type="NCBI Taxonomy" id="355277"/>
    <lineage>
        <taxon>Bacteria</taxon>
        <taxon>Pseudomonadati</taxon>
        <taxon>Spirochaetota</taxon>
        <taxon>Spirochaetia</taxon>
        <taxon>Leptospirales</taxon>
        <taxon>Leptospiraceae</taxon>
        <taxon>Leptospira</taxon>
    </lineage>
</organism>
<name>RS5_LEPBJ</name>
<protein>
    <recommendedName>
        <fullName evidence="1">Small ribosomal subunit protein uS5</fullName>
    </recommendedName>
    <alternativeName>
        <fullName evidence="2">30S ribosomal protein S5</fullName>
    </alternativeName>
</protein>
<comment type="function">
    <text evidence="1">With S4 and S12 plays an important role in translational accuracy.</text>
</comment>
<comment type="function">
    <text evidence="1">Located at the back of the 30S subunit body where it stabilizes the conformation of the head with respect to the body.</text>
</comment>
<comment type="subunit">
    <text evidence="1">Part of the 30S ribosomal subunit. Contacts proteins S4 and S8.</text>
</comment>
<comment type="domain">
    <text>The N-terminal domain interacts with the head of the 30S subunit; the C-terminal domain interacts with the body and contacts protein S4. The interaction surface between S4 and S5 is involved in control of translational fidelity.</text>
</comment>
<comment type="similarity">
    <text evidence="1">Belongs to the universal ribosomal protein uS5 family.</text>
</comment>
<reference key="1">
    <citation type="journal article" date="2006" name="Proc. Natl. Acad. Sci. U.S.A.">
        <title>Genome reduction in Leptospira borgpetersenii reflects limited transmission potential.</title>
        <authorList>
            <person name="Bulach D.M."/>
            <person name="Zuerner R.L."/>
            <person name="Wilson P."/>
            <person name="Seemann T."/>
            <person name="McGrath A."/>
            <person name="Cullen P.A."/>
            <person name="Davis J."/>
            <person name="Johnson M."/>
            <person name="Kuczek E."/>
            <person name="Alt D.P."/>
            <person name="Peterson-Burch B."/>
            <person name="Coppel R.L."/>
            <person name="Rood J.I."/>
            <person name="Davies J.K."/>
            <person name="Adler B."/>
        </authorList>
    </citation>
    <scope>NUCLEOTIDE SEQUENCE [LARGE SCALE GENOMIC DNA]</scope>
    <source>
        <strain>JB197</strain>
    </source>
</reference>
<gene>
    <name evidence="1" type="primary">rpsE</name>
    <name type="ordered locus">LBJ_2642</name>
</gene>
<accession>Q04PV5</accession>
<proteinExistence type="inferred from homology"/>
<dbReference type="EMBL" id="CP000350">
    <property type="protein sequence ID" value="ABJ77065.1"/>
    <property type="molecule type" value="Genomic_DNA"/>
</dbReference>
<dbReference type="RefSeq" id="WP_011669439.1">
    <property type="nucleotide sequence ID" value="NC_008510.1"/>
</dbReference>
<dbReference type="SMR" id="Q04PV5"/>
<dbReference type="KEGG" id="lbj:LBJ_2642"/>
<dbReference type="HOGENOM" id="CLU_065898_2_2_12"/>
<dbReference type="Proteomes" id="UP000000656">
    <property type="component" value="Chromosome 1"/>
</dbReference>
<dbReference type="GO" id="GO:0015935">
    <property type="term" value="C:small ribosomal subunit"/>
    <property type="evidence" value="ECO:0007669"/>
    <property type="project" value="InterPro"/>
</dbReference>
<dbReference type="GO" id="GO:0019843">
    <property type="term" value="F:rRNA binding"/>
    <property type="evidence" value="ECO:0007669"/>
    <property type="project" value="UniProtKB-UniRule"/>
</dbReference>
<dbReference type="GO" id="GO:0003735">
    <property type="term" value="F:structural constituent of ribosome"/>
    <property type="evidence" value="ECO:0007669"/>
    <property type="project" value="InterPro"/>
</dbReference>
<dbReference type="GO" id="GO:0006412">
    <property type="term" value="P:translation"/>
    <property type="evidence" value="ECO:0007669"/>
    <property type="project" value="UniProtKB-UniRule"/>
</dbReference>
<dbReference type="FunFam" id="3.30.160.20:FF:000001">
    <property type="entry name" value="30S ribosomal protein S5"/>
    <property type="match status" value="1"/>
</dbReference>
<dbReference type="FunFam" id="3.30.230.10:FF:000002">
    <property type="entry name" value="30S ribosomal protein S5"/>
    <property type="match status" value="1"/>
</dbReference>
<dbReference type="Gene3D" id="3.30.160.20">
    <property type="match status" value="1"/>
</dbReference>
<dbReference type="Gene3D" id="3.30.230.10">
    <property type="match status" value="1"/>
</dbReference>
<dbReference type="HAMAP" id="MF_01307_B">
    <property type="entry name" value="Ribosomal_uS5_B"/>
    <property type="match status" value="1"/>
</dbReference>
<dbReference type="InterPro" id="IPR020568">
    <property type="entry name" value="Ribosomal_Su5_D2-typ_SF"/>
</dbReference>
<dbReference type="InterPro" id="IPR000851">
    <property type="entry name" value="Ribosomal_uS5"/>
</dbReference>
<dbReference type="InterPro" id="IPR005712">
    <property type="entry name" value="Ribosomal_uS5_bac-type"/>
</dbReference>
<dbReference type="InterPro" id="IPR005324">
    <property type="entry name" value="Ribosomal_uS5_C"/>
</dbReference>
<dbReference type="InterPro" id="IPR013810">
    <property type="entry name" value="Ribosomal_uS5_N"/>
</dbReference>
<dbReference type="InterPro" id="IPR018192">
    <property type="entry name" value="Ribosomal_uS5_N_CS"/>
</dbReference>
<dbReference type="InterPro" id="IPR014721">
    <property type="entry name" value="Ribsml_uS5_D2-typ_fold_subgr"/>
</dbReference>
<dbReference type="NCBIfam" id="TIGR01021">
    <property type="entry name" value="rpsE_bact"/>
    <property type="match status" value="1"/>
</dbReference>
<dbReference type="PANTHER" id="PTHR48277">
    <property type="entry name" value="MITOCHONDRIAL RIBOSOMAL PROTEIN S5"/>
    <property type="match status" value="1"/>
</dbReference>
<dbReference type="PANTHER" id="PTHR48277:SF1">
    <property type="entry name" value="MITOCHONDRIAL RIBOSOMAL PROTEIN S5"/>
    <property type="match status" value="1"/>
</dbReference>
<dbReference type="Pfam" id="PF00333">
    <property type="entry name" value="Ribosomal_S5"/>
    <property type="match status" value="1"/>
</dbReference>
<dbReference type="Pfam" id="PF03719">
    <property type="entry name" value="Ribosomal_S5_C"/>
    <property type="match status" value="1"/>
</dbReference>
<dbReference type="SUPFAM" id="SSF54768">
    <property type="entry name" value="dsRNA-binding domain-like"/>
    <property type="match status" value="1"/>
</dbReference>
<dbReference type="SUPFAM" id="SSF54211">
    <property type="entry name" value="Ribosomal protein S5 domain 2-like"/>
    <property type="match status" value="1"/>
</dbReference>
<dbReference type="PROSITE" id="PS00585">
    <property type="entry name" value="RIBOSOMAL_S5"/>
    <property type="match status" value="1"/>
</dbReference>
<dbReference type="PROSITE" id="PS50881">
    <property type="entry name" value="S5_DSRBD"/>
    <property type="match status" value="1"/>
</dbReference>
<feature type="chain" id="PRO_0000323149" description="Small ribosomal subunit protein uS5">
    <location>
        <begin position="1"/>
        <end position="168"/>
    </location>
</feature>
<feature type="domain" description="S5 DRBM" evidence="1">
    <location>
        <begin position="11"/>
        <end position="74"/>
    </location>
</feature>